<name>ARGC_PROM4</name>
<keyword id="KW-0028">Amino-acid biosynthesis</keyword>
<keyword id="KW-0055">Arginine biosynthesis</keyword>
<keyword id="KW-0963">Cytoplasm</keyword>
<keyword id="KW-0521">NADP</keyword>
<keyword id="KW-0560">Oxidoreductase</keyword>
<keyword id="KW-1185">Reference proteome</keyword>
<comment type="function">
    <text evidence="1">Catalyzes the NADPH-dependent reduction of N-acetyl-5-glutamyl phosphate to yield N-acetyl-L-glutamate 5-semialdehyde.</text>
</comment>
<comment type="catalytic activity">
    <reaction evidence="1">
        <text>N-acetyl-L-glutamate 5-semialdehyde + phosphate + NADP(+) = N-acetyl-L-glutamyl 5-phosphate + NADPH + H(+)</text>
        <dbReference type="Rhea" id="RHEA:21588"/>
        <dbReference type="ChEBI" id="CHEBI:15378"/>
        <dbReference type="ChEBI" id="CHEBI:29123"/>
        <dbReference type="ChEBI" id="CHEBI:43474"/>
        <dbReference type="ChEBI" id="CHEBI:57783"/>
        <dbReference type="ChEBI" id="CHEBI:57936"/>
        <dbReference type="ChEBI" id="CHEBI:58349"/>
        <dbReference type="EC" id="1.2.1.38"/>
    </reaction>
</comment>
<comment type="pathway">
    <text evidence="1">Amino-acid biosynthesis; L-arginine biosynthesis; N(2)-acetyl-L-ornithine from L-glutamate: step 3/4.</text>
</comment>
<comment type="subcellular location">
    <subcellularLocation>
        <location evidence="1">Cytoplasm</location>
    </subcellularLocation>
</comment>
<comment type="similarity">
    <text evidence="1">Belongs to the NAGSA dehydrogenase family. Type 1 subfamily.</text>
</comment>
<evidence type="ECO:0000255" key="1">
    <source>
        <dbReference type="HAMAP-Rule" id="MF_00150"/>
    </source>
</evidence>
<protein>
    <recommendedName>
        <fullName evidence="1">N-acetyl-gamma-glutamyl-phosphate reductase</fullName>
        <shortName evidence="1">AGPR</shortName>
        <ecNumber evidence="1">1.2.1.38</ecNumber>
    </recommendedName>
    <alternativeName>
        <fullName evidence="1">N-acetyl-glutamate semialdehyde dehydrogenase</fullName>
        <shortName evidence="1">NAGSA dehydrogenase</shortName>
    </alternativeName>
</protein>
<accession>A9BAE1</accession>
<gene>
    <name evidence="1" type="primary">argC</name>
    <name type="ordered locus">P9211_08721</name>
</gene>
<feature type="chain" id="PRO_1000096735" description="N-acetyl-gamma-glutamyl-phosphate reductase">
    <location>
        <begin position="1"/>
        <end position="359"/>
    </location>
</feature>
<feature type="active site" evidence="1">
    <location>
        <position position="162"/>
    </location>
</feature>
<organism>
    <name type="scientific">Prochlorococcus marinus (strain MIT 9211)</name>
    <dbReference type="NCBI Taxonomy" id="93059"/>
    <lineage>
        <taxon>Bacteria</taxon>
        <taxon>Bacillati</taxon>
        <taxon>Cyanobacteriota</taxon>
        <taxon>Cyanophyceae</taxon>
        <taxon>Synechococcales</taxon>
        <taxon>Prochlorococcaceae</taxon>
        <taxon>Prochlorococcus</taxon>
    </lineage>
</organism>
<sequence length="359" mass="39761">MSLSNNNSNRVAIIGASGYGGLQLMRLLSDHPHFKVTFLGGNKTAGNKWHQIAPFIKSSEDLTVRKADPEDIAEHADFALLSLPNGLSSQLTPELIKRNIRIVDLSADYRYRSLYQWKQVYVKESTKYIRNDDSLCREATYGIPEWNEGDIRKSKLVACPGCFPTASLLPLMPFLKQGLVENEGLIIDAKSGTSGGGREPKEHLLLSECSESIAPYSVLGHRHTSEIEQQATLVSGTPIQLQFTPHLVPMVRGLLSTVYARLRDPGLTAEDCKTVLEAFYRSHSTVEILPVGIYPSTKWARYTNKALLSLQVDKRNGRLILVSVIDNLIKGQAGQAIQNLNIMAGFSHELGLPLTTFYP</sequence>
<proteinExistence type="inferred from homology"/>
<dbReference type="EC" id="1.2.1.38" evidence="1"/>
<dbReference type="EMBL" id="CP000878">
    <property type="protein sequence ID" value="ABX08803.1"/>
    <property type="molecule type" value="Genomic_DNA"/>
</dbReference>
<dbReference type="RefSeq" id="WP_012195425.1">
    <property type="nucleotide sequence ID" value="NC_009976.1"/>
</dbReference>
<dbReference type="SMR" id="A9BAE1"/>
<dbReference type="STRING" id="93059.P9211_08721"/>
<dbReference type="KEGG" id="pmj:P9211_08721"/>
<dbReference type="eggNOG" id="COG0002">
    <property type="taxonomic scope" value="Bacteria"/>
</dbReference>
<dbReference type="HOGENOM" id="CLU_006384_0_1_3"/>
<dbReference type="OrthoDB" id="9801289at2"/>
<dbReference type="UniPathway" id="UPA00068">
    <property type="reaction ID" value="UER00108"/>
</dbReference>
<dbReference type="Proteomes" id="UP000000788">
    <property type="component" value="Chromosome"/>
</dbReference>
<dbReference type="GO" id="GO:0005737">
    <property type="term" value="C:cytoplasm"/>
    <property type="evidence" value="ECO:0007669"/>
    <property type="project" value="UniProtKB-SubCell"/>
</dbReference>
<dbReference type="GO" id="GO:0003942">
    <property type="term" value="F:N-acetyl-gamma-glutamyl-phosphate reductase activity"/>
    <property type="evidence" value="ECO:0007669"/>
    <property type="project" value="UniProtKB-UniRule"/>
</dbReference>
<dbReference type="GO" id="GO:0051287">
    <property type="term" value="F:NAD binding"/>
    <property type="evidence" value="ECO:0007669"/>
    <property type="project" value="InterPro"/>
</dbReference>
<dbReference type="GO" id="GO:0070401">
    <property type="term" value="F:NADP+ binding"/>
    <property type="evidence" value="ECO:0007669"/>
    <property type="project" value="InterPro"/>
</dbReference>
<dbReference type="GO" id="GO:0006526">
    <property type="term" value="P:L-arginine biosynthetic process"/>
    <property type="evidence" value="ECO:0007669"/>
    <property type="project" value="UniProtKB-UniRule"/>
</dbReference>
<dbReference type="CDD" id="cd23934">
    <property type="entry name" value="AGPR_1_C"/>
    <property type="match status" value="1"/>
</dbReference>
<dbReference type="CDD" id="cd17895">
    <property type="entry name" value="AGPR_1_N"/>
    <property type="match status" value="1"/>
</dbReference>
<dbReference type="FunFam" id="3.30.360.10:FF:000014">
    <property type="entry name" value="N-acetyl-gamma-glutamyl-phosphate reductase"/>
    <property type="match status" value="1"/>
</dbReference>
<dbReference type="Gene3D" id="3.30.360.10">
    <property type="entry name" value="Dihydrodipicolinate Reductase, domain 2"/>
    <property type="match status" value="1"/>
</dbReference>
<dbReference type="Gene3D" id="3.40.50.720">
    <property type="entry name" value="NAD(P)-binding Rossmann-like Domain"/>
    <property type="match status" value="1"/>
</dbReference>
<dbReference type="HAMAP" id="MF_00150">
    <property type="entry name" value="ArgC_type1"/>
    <property type="match status" value="1"/>
</dbReference>
<dbReference type="InterPro" id="IPR023013">
    <property type="entry name" value="AGPR_AS"/>
</dbReference>
<dbReference type="InterPro" id="IPR000706">
    <property type="entry name" value="AGPR_type-1"/>
</dbReference>
<dbReference type="InterPro" id="IPR036291">
    <property type="entry name" value="NAD(P)-bd_dom_sf"/>
</dbReference>
<dbReference type="InterPro" id="IPR050085">
    <property type="entry name" value="NAGSA_dehydrogenase"/>
</dbReference>
<dbReference type="InterPro" id="IPR000534">
    <property type="entry name" value="Semialdehyde_DH_NAD-bd"/>
</dbReference>
<dbReference type="NCBIfam" id="TIGR01850">
    <property type="entry name" value="argC"/>
    <property type="match status" value="1"/>
</dbReference>
<dbReference type="PANTHER" id="PTHR32338:SF10">
    <property type="entry name" value="N-ACETYL-GAMMA-GLUTAMYL-PHOSPHATE REDUCTASE, CHLOROPLASTIC-RELATED"/>
    <property type="match status" value="1"/>
</dbReference>
<dbReference type="PANTHER" id="PTHR32338">
    <property type="entry name" value="N-ACETYL-GAMMA-GLUTAMYL-PHOSPHATE REDUCTASE, CHLOROPLASTIC-RELATED-RELATED"/>
    <property type="match status" value="1"/>
</dbReference>
<dbReference type="Pfam" id="PF01118">
    <property type="entry name" value="Semialdhyde_dh"/>
    <property type="match status" value="1"/>
</dbReference>
<dbReference type="Pfam" id="PF22698">
    <property type="entry name" value="Semialdhyde_dhC_1"/>
    <property type="match status" value="1"/>
</dbReference>
<dbReference type="SMART" id="SM00859">
    <property type="entry name" value="Semialdhyde_dh"/>
    <property type="match status" value="1"/>
</dbReference>
<dbReference type="SUPFAM" id="SSF55347">
    <property type="entry name" value="Glyceraldehyde-3-phosphate dehydrogenase-like, C-terminal domain"/>
    <property type="match status" value="1"/>
</dbReference>
<dbReference type="SUPFAM" id="SSF51735">
    <property type="entry name" value="NAD(P)-binding Rossmann-fold domains"/>
    <property type="match status" value="1"/>
</dbReference>
<dbReference type="PROSITE" id="PS01224">
    <property type="entry name" value="ARGC"/>
    <property type="match status" value="1"/>
</dbReference>
<reference key="1">
    <citation type="journal article" date="2007" name="PLoS Genet.">
        <title>Patterns and implications of gene gain and loss in the evolution of Prochlorococcus.</title>
        <authorList>
            <person name="Kettler G.C."/>
            <person name="Martiny A.C."/>
            <person name="Huang K."/>
            <person name="Zucker J."/>
            <person name="Coleman M.L."/>
            <person name="Rodrigue S."/>
            <person name="Chen F."/>
            <person name="Lapidus A."/>
            <person name="Ferriera S."/>
            <person name="Johnson J."/>
            <person name="Steglich C."/>
            <person name="Church G.M."/>
            <person name="Richardson P."/>
            <person name="Chisholm S.W."/>
        </authorList>
    </citation>
    <scope>NUCLEOTIDE SEQUENCE [LARGE SCALE GENOMIC DNA]</scope>
    <source>
        <strain>MIT 9211</strain>
    </source>
</reference>